<sequence>MQASQFSAQVLDWYDKYGRKTLPWQIDKTPYKVWLSEVMLQQTQVATVIPYFERFMARFPTVTDLANAPLDEVLHLWTGLGYYARARNLHKAAQQVATLHGGKFPETFEEVAALPGVGRSTAGAILSLSLGKHFPILDGNVKRVLARCYAVSGWPGKKEVENKLWSLSEQVTPAVGVERFNQAMMDLGAMICTRSKPKCSLCPLQNGCIAAANNSWALYPGKKPKQTLPERTGYFLLLQHEDEVLLAQRPPSGLWGGLYCFPQFADEESLRQWLAQRQIAADNLTQLTAFRHTFSHFHLDIVPMWLPVSSFTGCMDEGNALWYNLAQPPSVGLAAPVERLLQQLRTGAPV</sequence>
<dbReference type="EC" id="3.2.2.31" evidence="2 3"/>
<dbReference type="EMBL" id="X52391">
    <property type="protein sequence ID" value="CAA36624.1"/>
    <property type="molecule type" value="Genomic_DNA"/>
</dbReference>
<dbReference type="EMBL" id="M59471">
    <property type="protein sequence ID" value="AAA72957.1"/>
    <property type="molecule type" value="Genomic_DNA"/>
</dbReference>
<dbReference type="EMBL" id="U28377">
    <property type="protein sequence ID" value="AAA69128.1"/>
    <property type="molecule type" value="Genomic_DNA"/>
</dbReference>
<dbReference type="EMBL" id="U00096">
    <property type="protein sequence ID" value="AAC75998.1"/>
    <property type="molecule type" value="Genomic_DNA"/>
</dbReference>
<dbReference type="EMBL" id="AP009048">
    <property type="protein sequence ID" value="BAE77024.1"/>
    <property type="molecule type" value="Genomic_DNA"/>
</dbReference>
<dbReference type="PIR" id="B38535">
    <property type="entry name" value="B38535"/>
</dbReference>
<dbReference type="RefSeq" id="NP_417436.1">
    <property type="nucleotide sequence ID" value="NC_000913.3"/>
</dbReference>
<dbReference type="RefSeq" id="WP_001321419.1">
    <property type="nucleotide sequence ID" value="NZ_SSUV01000019.1"/>
</dbReference>
<dbReference type="PDB" id="1KG2">
    <property type="method" value="X-ray"/>
    <property type="resolution" value="1.20 A"/>
    <property type="chains" value="A=1-225"/>
</dbReference>
<dbReference type="PDB" id="1KG3">
    <property type="method" value="X-ray"/>
    <property type="resolution" value="1.55 A"/>
    <property type="chains" value="A=1-225"/>
</dbReference>
<dbReference type="PDB" id="1KG4">
    <property type="method" value="X-ray"/>
    <property type="resolution" value="1.60 A"/>
    <property type="chains" value="A=1-225"/>
</dbReference>
<dbReference type="PDB" id="1KG5">
    <property type="method" value="X-ray"/>
    <property type="resolution" value="1.35 A"/>
    <property type="chains" value="A=1-225"/>
</dbReference>
<dbReference type="PDB" id="1KG6">
    <property type="method" value="X-ray"/>
    <property type="resolution" value="1.50 A"/>
    <property type="chains" value="A=1-225"/>
</dbReference>
<dbReference type="PDB" id="1KG7">
    <property type="method" value="X-ray"/>
    <property type="resolution" value="1.50 A"/>
    <property type="chains" value="A=1-225"/>
</dbReference>
<dbReference type="PDB" id="1KQJ">
    <property type="method" value="X-ray"/>
    <property type="resolution" value="1.70 A"/>
    <property type="chains" value="A=1-225"/>
</dbReference>
<dbReference type="PDB" id="1MUD">
    <property type="method" value="X-ray"/>
    <property type="resolution" value="1.80 A"/>
    <property type="chains" value="A=1-225"/>
</dbReference>
<dbReference type="PDB" id="1MUN">
    <property type="method" value="X-ray"/>
    <property type="resolution" value="1.20 A"/>
    <property type="chains" value="A=1-225"/>
</dbReference>
<dbReference type="PDB" id="1MUY">
    <property type="method" value="X-ray"/>
    <property type="resolution" value="1.40 A"/>
    <property type="chains" value="A=1-225"/>
</dbReference>
<dbReference type="PDB" id="1WEF">
    <property type="method" value="X-ray"/>
    <property type="resolution" value="1.90 A"/>
    <property type="chains" value="A=1-225"/>
</dbReference>
<dbReference type="PDB" id="1WEG">
    <property type="method" value="X-ray"/>
    <property type="resolution" value="1.80 A"/>
    <property type="chains" value="A=1-225"/>
</dbReference>
<dbReference type="PDB" id="1WEI">
    <property type="method" value="X-ray"/>
    <property type="resolution" value="1.45 A"/>
    <property type="chains" value="A=1-225"/>
</dbReference>
<dbReference type="PDBsum" id="1KG2"/>
<dbReference type="PDBsum" id="1KG3"/>
<dbReference type="PDBsum" id="1KG4"/>
<dbReference type="PDBsum" id="1KG5"/>
<dbReference type="PDBsum" id="1KG6"/>
<dbReference type="PDBsum" id="1KG7"/>
<dbReference type="PDBsum" id="1KQJ"/>
<dbReference type="PDBsum" id="1MUD"/>
<dbReference type="PDBsum" id="1MUN"/>
<dbReference type="PDBsum" id="1MUY"/>
<dbReference type="PDBsum" id="1WEF"/>
<dbReference type="PDBsum" id="1WEG"/>
<dbReference type="PDBsum" id="1WEI"/>
<dbReference type="BMRB" id="P17802"/>
<dbReference type="SMR" id="P17802"/>
<dbReference type="BioGRID" id="4262359">
    <property type="interactions" value="423"/>
</dbReference>
<dbReference type="BioGRID" id="851767">
    <property type="interactions" value="3"/>
</dbReference>
<dbReference type="DIP" id="DIP-10289N"/>
<dbReference type="FunCoup" id="P17802">
    <property type="interactions" value="575"/>
</dbReference>
<dbReference type="IntAct" id="P17802">
    <property type="interactions" value="11"/>
</dbReference>
<dbReference type="STRING" id="511145.b2961"/>
<dbReference type="DrugBank" id="DB00173">
    <property type="generic name" value="Adenine"/>
</dbReference>
<dbReference type="DrugBank" id="DB02379">
    <property type="generic name" value="Beta-D-Glucose"/>
</dbReference>
<dbReference type="DrugBank" id="DB09462">
    <property type="generic name" value="Glycerin"/>
</dbReference>
<dbReference type="DrugBank" id="DB03366">
    <property type="generic name" value="Imidazole"/>
</dbReference>
<dbReference type="jPOST" id="P17802"/>
<dbReference type="PaxDb" id="511145-b2961"/>
<dbReference type="EnsemblBacteria" id="AAC75998">
    <property type="protein sequence ID" value="AAC75998"/>
    <property type="gene ID" value="b2961"/>
</dbReference>
<dbReference type="GeneID" id="947447"/>
<dbReference type="KEGG" id="ecj:JW2928"/>
<dbReference type="KEGG" id="eco:b2961"/>
<dbReference type="KEGG" id="ecoc:C3026_16205"/>
<dbReference type="PATRIC" id="fig|1411691.4.peg.3770"/>
<dbReference type="EchoBASE" id="EB0622"/>
<dbReference type="eggNOG" id="COG1194">
    <property type="taxonomic scope" value="Bacteria"/>
</dbReference>
<dbReference type="HOGENOM" id="CLU_012862_0_2_6"/>
<dbReference type="InParanoid" id="P17802"/>
<dbReference type="OMA" id="EADWLWY"/>
<dbReference type="OrthoDB" id="9802365at2"/>
<dbReference type="PhylomeDB" id="P17802"/>
<dbReference type="BioCyc" id="EcoCyc:EG10627-MONOMER"/>
<dbReference type="BioCyc" id="MetaCyc:EG10627-MONOMER"/>
<dbReference type="BRENDA" id="3.2.2.31">
    <property type="organism ID" value="2026"/>
</dbReference>
<dbReference type="EvolutionaryTrace" id="P17802"/>
<dbReference type="PRO" id="PR:P17802"/>
<dbReference type="Proteomes" id="UP000000625">
    <property type="component" value="Chromosome"/>
</dbReference>
<dbReference type="GO" id="GO:0051539">
    <property type="term" value="F:4 iron, 4 sulfur cluster binding"/>
    <property type="evidence" value="ECO:0007669"/>
    <property type="project" value="UniProtKB-KW"/>
</dbReference>
<dbReference type="GO" id="GO:0034039">
    <property type="term" value="F:8-oxo-7,8-dihydroguanine DNA N-glycosylase activity"/>
    <property type="evidence" value="ECO:0000318"/>
    <property type="project" value="GO_Central"/>
</dbReference>
<dbReference type="GO" id="GO:0035485">
    <property type="term" value="F:adenine/guanine mispair binding"/>
    <property type="evidence" value="ECO:0000318"/>
    <property type="project" value="GO_Central"/>
</dbReference>
<dbReference type="GO" id="GO:0046872">
    <property type="term" value="F:metal ion binding"/>
    <property type="evidence" value="ECO:0007669"/>
    <property type="project" value="UniProtKB-KW"/>
</dbReference>
<dbReference type="GO" id="GO:0032357">
    <property type="term" value="F:oxidized purine DNA binding"/>
    <property type="evidence" value="ECO:0000318"/>
    <property type="project" value="GO_Central"/>
</dbReference>
<dbReference type="GO" id="GO:0000701">
    <property type="term" value="F:purine-specific mismatch base pair DNA N-glycosylase activity"/>
    <property type="evidence" value="ECO:0000318"/>
    <property type="project" value="GO_Central"/>
</dbReference>
<dbReference type="GO" id="GO:0006284">
    <property type="term" value="P:base-excision repair"/>
    <property type="evidence" value="ECO:0000318"/>
    <property type="project" value="GO_Central"/>
</dbReference>
<dbReference type="GO" id="GO:0006298">
    <property type="term" value="P:mismatch repair"/>
    <property type="evidence" value="ECO:0000318"/>
    <property type="project" value="GO_Central"/>
</dbReference>
<dbReference type="CDD" id="cd00056">
    <property type="entry name" value="ENDO3c"/>
    <property type="match status" value="1"/>
</dbReference>
<dbReference type="CDD" id="cd03431">
    <property type="entry name" value="NUDIX_DNA_Glycosylase_C-MutY"/>
    <property type="match status" value="1"/>
</dbReference>
<dbReference type="FunFam" id="1.10.1670.10:FF:000002">
    <property type="entry name" value="Adenine DNA glycosylase"/>
    <property type="match status" value="1"/>
</dbReference>
<dbReference type="FunFam" id="1.10.340.30:FF:000002">
    <property type="entry name" value="Adenine DNA glycosylase"/>
    <property type="match status" value="1"/>
</dbReference>
<dbReference type="FunFam" id="3.90.79.10:FF:000028">
    <property type="entry name" value="Adenine DNA glycosylase"/>
    <property type="match status" value="1"/>
</dbReference>
<dbReference type="Gene3D" id="1.10.1670.10">
    <property type="entry name" value="Helix-hairpin-Helix base-excision DNA repair enzymes (C-terminal)"/>
    <property type="match status" value="1"/>
</dbReference>
<dbReference type="Gene3D" id="1.10.340.30">
    <property type="entry name" value="Hypothetical protein, domain 2"/>
    <property type="match status" value="1"/>
</dbReference>
<dbReference type="Gene3D" id="3.90.79.10">
    <property type="entry name" value="Nucleoside Triphosphate Pyrophosphohydrolase"/>
    <property type="match status" value="1"/>
</dbReference>
<dbReference type="InterPro" id="IPR005760">
    <property type="entry name" value="A/G_AdeGlyc_MutY"/>
</dbReference>
<dbReference type="InterPro" id="IPR011257">
    <property type="entry name" value="DNA_glycosylase"/>
</dbReference>
<dbReference type="InterPro" id="IPR004036">
    <property type="entry name" value="Endonuclease-III-like_CS2"/>
</dbReference>
<dbReference type="InterPro" id="IPR003651">
    <property type="entry name" value="Endonuclease3_FeS-loop_motif"/>
</dbReference>
<dbReference type="InterPro" id="IPR004035">
    <property type="entry name" value="Endouclease-III_FeS-bd_BS"/>
</dbReference>
<dbReference type="InterPro" id="IPR003265">
    <property type="entry name" value="HhH-GPD_domain"/>
</dbReference>
<dbReference type="InterPro" id="IPR023170">
    <property type="entry name" value="HhH_base_excis_C"/>
</dbReference>
<dbReference type="InterPro" id="IPR000445">
    <property type="entry name" value="HhH_motif"/>
</dbReference>
<dbReference type="InterPro" id="IPR044298">
    <property type="entry name" value="MIG/MutY"/>
</dbReference>
<dbReference type="InterPro" id="IPR029119">
    <property type="entry name" value="MutY_C"/>
</dbReference>
<dbReference type="InterPro" id="IPR015797">
    <property type="entry name" value="NUDIX_hydrolase-like_dom_sf"/>
</dbReference>
<dbReference type="NCBIfam" id="TIGR01084">
    <property type="entry name" value="mutY"/>
    <property type="match status" value="1"/>
</dbReference>
<dbReference type="NCBIfam" id="NF008132">
    <property type="entry name" value="PRK10880.1"/>
    <property type="match status" value="1"/>
</dbReference>
<dbReference type="PANTHER" id="PTHR42944">
    <property type="entry name" value="ADENINE DNA GLYCOSYLASE"/>
    <property type="match status" value="1"/>
</dbReference>
<dbReference type="PANTHER" id="PTHR42944:SF1">
    <property type="entry name" value="ADENINE DNA GLYCOSYLASE"/>
    <property type="match status" value="1"/>
</dbReference>
<dbReference type="Pfam" id="PF10576">
    <property type="entry name" value="EndIII_4Fe-2S"/>
    <property type="match status" value="1"/>
</dbReference>
<dbReference type="Pfam" id="PF00633">
    <property type="entry name" value="HHH"/>
    <property type="match status" value="1"/>
</dbReference>
<dbReference type="Pfam" id="PF00730">
    <property type="entry name" value="HhH-GPD"/>
    <property type="match status" value="1"/>
</dbReference>
<dbReference type="Pfam" id="PF14815">
    <property type="entry name" value="NUDIX_4"/>
    <property type="match status" value="1"/>
</dbReference>
<dbReference type="SMART" id="SM00478">
    <property type="entry name" value="ENDO3c"/>
    <property type="match status" value="1"/>
</dbReference>
<dbReference type="SMART" id="SM00525">
    <property type="entry name" value="FES"/>
    <property type="match status" value="1"/>
</dbReference>
<dbReference type="SUPFAM" id="SSF48150">
    <property type="entry name" value="DNA-glycosylase"/>
    <property type="match status" value="1"/>
</dbReference>
<dbReference type="SUPFAM" id="SSF55811">
    <property type="entry name" value="Nudix"/>
    <property type="match status" value="1"/>
</dbReference>
<dbReference type="PROSITE" id="PS00764">
    <property type="entry name" value="ENDONUCLEASE_III_1"/>
    <property type="match status" value="1"/>
</dbReference>
<dbReference type="PROSITE" id="PS01155">
    <property type="entry name" value="ENDONUCLEASE_III_2"/>
    <property type="match status" value="1"/>
</dbReference>
<feature type="chain" id="PRO_0000102234" description="Adenine DNA glycosylase">
    <location>
        <begin position="1"/>
        <end position="350"/>
    </location>
</feature>
<feature type="active site" description="Proton donor/acceptor" evidence="1">
    <location>
        <position position="37"/>
    </location>
</feature>
<feature type="binding site">
    <location>
        <position position="192"/>
    </location>
    <ligand>
        <name>[4Fe-4S] cluster</name>
        <dbReference type="ChEBI" id="CHEBI:49883"/>
    </ligand>
</feature>
<feature type="binding site">
    <location>
        <position position="199"/>
    </location>
    <ligand>
        <name>[4Fe-4S] cluster</name>
        <dbReference type="ChEBI" id="CHEBI:49883"/>
    </ligand>
</feature>
<feature type="binding site">
    <location>
        <position position="202"/>
    </location>
    <ligand>
        <name>[4Fe-4S] cluster</name>
        <dbReference type="ChEBI" id="CHEBI:49883"/>
    </ligand>
</feature>
<feature type="binding site">
    <location>
        <position position="208"/>
    </location>
    <ligand>
        <name>[4Fe-4S] cluster</name>
        <dbReference type="ChEBI" id="CHEBI:49883"/>
    </ligand>
</feature>
<feature type="site" description="Transition state stabilizer" evidence="1">
    <location>
        <position position="138"/>
    </location>
</feature>
<feature type="helix" evidence="6">
    <location>
        <begin position="3"/>
        <end position="17"/>
    </location>
</feature>
<feature type="helix" evidence="6">
    <location>
        <begin position="23"/>
        <end position="25"/>
    </location>
</feature>
<feature type="helix" evidence="6">
    <location>
        <begin position="30"/>
        <end position="40"/>
    </location>
</feature>
<feature type="strand" evidence="7">
    <location>
        <begin position="41"/>
        <end position="43"/>
    </location>
</feature>
<feature type="helix" evidence="6">
    <location>
        <begin position="45"/>
        <end position="58"/>
    </location>
</feature>
<feature type="helix" evidence="6">
    <location>
        <begin position="62"/>
        <end position="67"/>
    </location>
</feature>
<feature type="helix" evidence="6">
    <location>
        <begin position="70"/>
        <end position="77"/>
    </location>
</feature>
<feature type="helix" evidence="6">
    <location>
        <begin position="84"/>
        <end position="99"/>
    </location>
</feature>
<feature type="helix" evidence="6">
    <location>
        <begin position="108"/>
        <end position="112"/>
    </location>
</feature>
<feature type="helix" evidence="6">
    <location>
        <begin position="119"/>
        <end position="130"/>
    </location>
</feature>
<feature type="helix" evidence="6">
    <location>
        <begin position="139"/>
        <end position="149"/>
    </location>
</feature>
<feature type="helix" evidence="6">
    <location>
        <begin position="158"/>
        <end position="171"/>
    </location>
</feature>
<feature type="helix" evidence="6">
    <location>
        <begin position="177"/>
        <end position="190"/>
    </location>
</feature>
<feature type="strand" evidence="6">
    <location>
        <begin position="194"/>
        <end position="196"/>
    </location>
</feature>
<feature type="helix" evidence="6">
    <location>
        <begin position="199"/>
        <end position="201"/>
    </location>
</feature>
<feature type="turn" evidence="6">
    <location>
        <begin position="203"/>
        <end position="207"/>
    </location>
</feature>
<feature type="helix" evidence="6">
    <location>
        <begin position="209"/>
        <end position="213"/>
    </location>
</feature>
<feature type="helix" evidence="6">
    <location>
        <begin position="216"/>
        <end position="218"/>
    </location>
</feature>
<reference key="1">
    <citation type="journal article" date="1990" name="Nucleic Acids Res.">
        <title>MutY, an adenine glycosylase active on G-A mispairs, has homology to endonuclease III.</title>
        <authorList>
            <person name="Michaels M.L."/>
            <person name="Pham L."/>
            <person name="Nghiem Y."/>
            <person name="Cruz C."/>
            <person name="Miller J.H."/>
        </authorList>
    </citation>
    <scope>NUCLEOTIDE SEQUENCE [GENOMIC DNA]</scope>
    <source>
        <strain>K12</strain>
    </source>
</reference>
<reference key="2">
    <citation type="journal article" date="1991" name="J. Bacteriol.">
        <title>Nucleotide sequence of the Escherichia coli micA gene required for A/G-specific mismatch repair: identity of micA and mutY.</title>
        <authorList>
            <person name="Tsai-Wu J.-J."/>
            <person name="Radicella J.P."/>
            <person name="Lu A.-L."/>
        </authorList>
    </citation>
    <scope>NUCLEOTIDE SEQUENCE [GENOMIC DNA]</scope>
    <source>
        <strain>K12</strain>
    </source>
</reference>
<reference key="3">
    <citation type="journal article" date="1997" name="Science">
        <title>The complete genome sequence of Escherichia coli K-12.</title>
        <authorList>
            <person name="Blattner F.R."/>
            <person name="Plunkett G. III"/>
            <person name="Bloch C.A."/>
            <person name="Perna N.T."/>
            <person name="Burland V."/>
            <person name="Riley M."/>
            <person name="Collado-Vides J."/>
            <person name="Glasner J.D."/>
            <person name="Rode C.K."/>
            <person name="Mayhew G.F."/>
            <person name="Gregor J."/>
            <person name="Davis N.W."/>
            <person name="Kirkpatrick H.A."/>
            <person name="Goeden M.A."/>
            <person name="Rose D.J."/>
            <person name="Mau B."/>
            <person name="Shao Y."/>
        </authorList>
    </citation>
    <scope>NUCLEOTIDE SEQUENCE [LARGE SCALE GENOMIC DNA]</scope>
    <source>
        <strain>K12 / MG1655 / ATCC 47076</strain>
    </source>
</reference>
<reference key="4">
    <citation type="journal article" date="2006" name="Mol. Syst. Biol.">
        <title>Highly accurate genome sequences of Escherichia coli K-12 strains MG1655 and W3110.</title>
        <authorList>
            <person name="Hayashi K."/>
            <person name="Morooka N."/>
            <person name="Yamamoto Y."/>
            <person name="Fujita K."/>
            <person name="Isono K."/>
            <person name="Choi S."/>
            <person name="Ohtsubo E."/>
            <person name="Baba T."/>
            <person name="Wanner B.L."/>
            <person name="Mori H."/>
            <person name="Horiuchi T."/>
        </authorList>
    </citation>
    <scope>NUCLEOTIDE SEQUENCE [LARGE SCALE GENOMIC DNA]</scope>
    <source>
        <strain>K12 / W3110 / ATCC 27325 / DSM 5911</strain>
    </source>
</reference>
<reference key="5">
    <citation type="journal article" date="1989" name="Proc. Natl. Acad. Sci. U.S.A.">
        <title>Escherichia coli mutY gene encodes an adenine glycosylase active on G-A mispairs.</title>
        <authorList>
            <person name="Au K.G."/>
            <person name="Clark S."/>
            <person name="Miller J.H."/>
            <person name="Modrich P."/>
        </authorList>
    </citation>
    <scope>FUNCTION</scope>
    <scope>CATALYTIC ACTIVITY</scope>
    <scope>SUBUNIT</scope>
</reference>
<reference key="6">
    <citation type="journal article" date="1992" name="Biochemistry">
        <title>A repair system for 8-oxo-7,8-dihydrodeoxyguanine.</title>
        <authorList>
            <person name="Michaels M.L."/>
            <person name="Tchou J."/>
            <person name="Grollman A.P."/>
            <person name="Miller J.H."/>
        </authorList>
    </citation>
    <scope>FUNCTION</scope>
    <scope>CATALYTIC ACTIVITY</scope>
</reference>
<reference key="7">
    <citation type="journal article" date="1998" name="Nat. Struct. Biol.">
        <title>MutY catalytic core, mutant and bound adenine structures define specificity for DNA repair enzyme superfamily.</title>
        <authorList>
            <person name="Guan Y."/>
            <person name="Manuel R.C."/>
            <person name="Arvai A.S."/>
            <person name="Parikh S.S."/>
            <person name="Mol C.D."/>
            <person name="Miller J.H."/>
            <person name="Lloyd S."/>
            <person name="Tainer J.A."/>
        </authorList>
    </citation>
    <scope>X-RAY CRYSTALLOGRAPHY (1.2 ANGSTROMS)</scope>
    <scope>COFACTOR</scope>
</reference>
<comment type="function">
    <text evidence="2 3">Adenine glycosylase active on G-A mispairs. MutY also corrects error-prone DNA synthesis past GO lesions which are due to the oxidatively damaged form of guanine: 7,8-dihydro-8-oxoguanine (8-oxo-dGTP).</text>
</comment>
<comment type="catalytic activity">
    <reaction evidence="2 3">
        <text>Hydrolyzes free adenine bases from 7,8-dihydro-8-oxoguanine:adenine mismatched double-stranded DNA, leaving an apurinic site.</text>
        <dbReference type="EC" id="3.2.2.31"/>
    </reaction>
</comment>
<comment type="cofactor">
    <cofactor evidence="4">
        <name>[4Fe-4S] cluster</name>
        <dbReference type="ChEBI" id="CHEBI:49883"/>
    </cofactor>
    <text>Binds 1 [4Fe-4S] cluster. The cluster does not appear to play a role in catalysis, but is probably involved in the proper positioning of the enzyme along the DNA strand.</text>
</comment>
<comment type="subunit">
    <text evidence="3">Monomer.</text>
</comment>
<comment type="similarity">
    <text evidence="5">Belongs to the Nth/MutY family.</text>
</comment>
<organism>
    <name type="scientific">Escherichia coli (strain K12)</name>
    <dbReference type="NCBI Taxonomy" id="83333"/>
    <lineage>
        <taxon>Bacteria</taxon>
        <taxon>Pseudomonadati</taxon>
        <taxon>Pseudomonadota</taxon>
        <taxon>Gammaproteobacteria</taxon>
        <taxon>Enterobacterales</taxon>
        <taxon>Enterobacteriaceae</taxon>
        <taxon>Escherichia</taxon>
    </lineage>
</organism>
<name>MUTY_ECOLI</name>
<protein>
    <recommendedName>
        <fullName>Adenine DNA glycosylase</fullName>
        <ecNumber evidence="2 3">3.2.2.31</ecNumber>
    </recommendedName>
    <alternativeName>
        <fullName>A/G-specific adenine glycosylase</fullName>
    </alternativeName>
</protein>
<proteinExistence type="evidence at protein level"/>
<gene>
    <name type="primary">mutY</name>
    <name type="synonym">micA</name>
    <name type="ordered locus">b2961</name>
    <name type="ordered locus">JW2928</name>
</gene>
<keyword id="KW-0002">3D-structure</keyword>
<keyword id="KW-0004">4Fe-4S</keyword>
<keyword id="KW-0227">DNA damage</keyword>
<keyword id="KW-0234">DNA repair</keyword>
<keyword id="KW-0326">Glycosidase</keyword>
<keyword id="KW-0378">Hydrolase</keyword>
<keyword id="KW-0408">Iron</keyword>
<keyword id="KW-0411">Iron-sulfur</keyword>
<keyword id="KW-0479">Metal-binding</keyword>
<keyword id="KW-1185">Reference proteome</keyword>
<accession>P17802</accession>
<accession>Q2M9N2</accession>
<evidence type="ECO:0000250" key="1">
    <source>
        <dbReference type="UniProtKB" id="P83847"/>
    </source>
</evidence>
<evidence type="ECO:0000269" key="2">
    <source>
    </source>
</evidence>
<evidence type="ECO:0000269" key="3">
    <source>
    </source>
</evidence>
<evidence type="ECO:0000269" key="4">
    <source>
    </source>
</evidence>
<evidence type="ECO:0000305" key="5"/>
<evidence type="ECO:0007829" key="6">
    <source>
        <dbReference type="PDB" id="1KG2"/>
    </source>
</evidence>
<evidence type="ECO:0007829" key="7">
    <source>
        <dbReference type="PDB" id="1WEF"/>
    </source>
</evidence>